<evidence type="ECO:0000255" key="1">
    <source>
        <dbReference type="HAMAP-Rule" id="MF_00168"/>
    </source>
</evidence>
<keyword id="KW-0328">Glycosyltransferase</keyword>
<keyword id="KW-0479">Metal-binding</keyword>
<keyword id="KW-0671">Queuosine biosynthesis</keyword>
<keyword id="KW-0808">Transferase</keyword>
<keyword id="KW-0819">tRNA processing</keyword>
<keyword id="KW-0862">Zinc</keyword>
<comment type="function">
    <text evidence="1">Catalyzes the base-exchange of a guanine (G) residue with the queuine precursor 7-aminomethyl-7-deazaguanine (PreQ1) at position 34 (anticodon wobble position) in tRNAs with GU(N) anticodons (tRNA-Asp, -Asn, -His and -Tyr). Catalysis occurs through a double-displacement mechanism. The nucleophile active site attacks the C1' of nucleotide 34 to detach the guanine base from the RNA, forming a covalent enzyme-RNA intermediate. The proton acceptor active site deprotonates the incoming PreQ1, allowing a nucleophilic attack on the C1' of the ribose to form the product. After dissociation, two additional enzymatic reactions on the tRNA convert PreQ1 to queuine (Q), resulting in the hypermodified nucleoside queuosine (7-(((4,5-cis-dihydroxy-2-cyclopenten-1-yl)amino)methyl)-7-deazaguanosine).</text>
</comment>
<comment type="catalytic activity">
    <reaction evidence="1">
        <text>7-aminomethyl-7-carbaguanine + guanosine(34) in tRNA = 7-aminomethyl-7-carbaguanosine(34) in tRNA + guanine</text>
        <dbReference type="Rhea" id="RHEA:24104"/>
        <dbReference type="Rhea" id="RHEA-COMP:10341"/>
        <dbReference type="Rhea" id="RHEA-COMP:10342"/>
        <dbReference type="ChEBI" id="CHEBI:16235"/>
        <dbReference type="ChEBI" id="CHEBI:58703"/>
        <dbReference type="ChEBI" id="CHEBI:74269"/>
        <dbReference type="ChEBI" id="CHEBI:82833"/>
        <dbReference type="EC" id="2.4.2.29"/>
    </reaction>
</comment>
<comment type="cofactor">
    <cofactor evidence="1">
        <name>Zn(2+)</name>
        <dbReference type="ChEBI" id="CHEBI:29105"/>
    </cofactor>
    <text evidence="1">Binds 1 zinc ion per subunit.</text>
</comment>
<comment type="pathway">
    <text evidence="1">tRNA modification; tRNA-queuosine biosynthesis.</text>
</comment>
<comment type="subunit">
    <text evidence="1">Homodimer. Within each dimer, one monomer is responsible for RNA recognition and catalysis, while the other monomer binds to the replacement base PreQ1.</text>
</comment>
<comment type="similarity">
    <text evidence="1">Belongs to the queuine tRNA-ribosyltransferase family.</text>
</comment>
<accession>B8DHL8</accession>
<feature type="chain" id="PRO_1000198014" description="Queuine tRNA-ribosyltransferase">
    <location>
        <begin position="1"/>
        <end position="379"/>
    </location>
</feature>
<feature type="region of interest" description="RNA binding" evidence="1">
    <location>
        <begin position="249"/>
        <end position="255"/>
    </location>
</feature>
<feature type="region of interest" description="RNA binding; important for wobble base 34 recognition" evidence="1">
    <location>
        <begin position="273"/>
        <end position="277"/>
    </location>
</feature>
<feature type="active site" description="Proton acceptor" evidence="1">
    <location>
        <position position="94"/>
    </location>
</feature>
<feature type="active site" description="Nucleophile" evidence="1">
    <location>
        <position position="268"/>
    </location>
</feature>
<feature type="binding site" evidence="1">
    <location>
        <begin position="94"/>
        <end position="98"/>
    </location>
    <ligand>
        <name>substrate</name>
    </ligand>
</feature>
<feature type="binding site" evidence="1">
    <location>
        <position position="148"/>
    </location>
    <ligand>
        <name>substrate</name>
    </ligand>
</feature>
<feature type="binding site" evidence="1">
    <location>
        <position position="191"/>
    </location>
    <ligand>
        <name>substrate</name>
    </ligand>
</feature>
<feature type="binding site" evidence="1">
    <location>
        <position position="218"/>
    </location>
    <ligand>
        <name>substrate</name>
    </ligand>
</feature>
<feature type="binding site" evidence="1">
    <location>
        <position position="306"/>
    </location>
    <ligand>
        <name>Zn(2+)</name>
        <dbReference type="ChEBI" id="CHEBI:29105"/>
    </ligand>
</feature>
<feature type="binding site" evidence="1">
    <location>
        <position position="308"/>
    </location>
    <ligand>
        <name>Zn(2+)</name>
        <dbReference type="ChEBI" id="CHEBI:29105"/>
    </ligand>
</feature>
<feature type="binding site" evidence="1">
    <location>
        <position position="311"/>
    </location>
    <ligand>
        <name>Zn(2+)</name>
        <dbReference type="ChEBI" id="CHEBI:29105"/>
    </ligand>
</feature>
<feature type="binding site" evidence="1">
    <location>
        <position position="337"/>
    </location>
    <ligand>
        <name>Zn(2+)</name>
        <dbReference type="ChEBI" id="CHEBI:29105"/>
    </ligand>
</feature>
<gene>
    <name evidence="1" type="primary">tgt</name>
    <name type="ordered locus">LMHCC_1039</name>
</gene>
<protein>
    <recommendedName>
        <fullName evidence="1">Queuine tRNA-ribosyltransferase</fullName>
        <ecNumber evidence="1">2.4.2.29</ecNumber>
    </recommendedName>
    <alternativeName>
        <fullName evidence="1">Guanine insertion enzyme</fullName>
    </alternativeName>
    <alternativeName>
        <fullName evidence="1">tRNA-guanine transglycosylase</fullName>
    </alternativeName>
</protein>
<dbReference type="EC" id="2.4.2.29" evidence="1"/>
<dbReference type="EMBL" id="CP001175">
    <property type="protein sequence ID" value="ACK39387.1"/>
    <property type="molecule type" value="Genomic_DNA"/>
</dbReference>
<dbReference type="RefSeq" id="WP_003762399.1">
    <property type="nucleotide sequence ID" value="NC_011660.1"/>
</dbReference>
<dbReference type="SMR" id="B8DHL8"/>
<dbReference type="GeneID" id="93234947"/>
<dbReference type="KEGG" id="lmh:LMHCC_1039"/>
<dbReference type="HOGENOM" id="CLU_022060_0_1_9"/>
<dbReference type="UniPathway" id="UPA00392"/>
<dbReference type="GO" id="GO:0005829">
    <property type="term" value="C:cytosol"/>
    <property type="evidence" value="ECO:0007669"/>
    <property type="project" value="TreeGrafter"/>
</dbReference>
<dbReference type="GO" id="GO:0046872">
    <property type="term" value="F:metal ion binding"/>
    <property type="evidence" value="ECO:0007669"/>
    <property type="project" value="UniProtKB-KW"/>
</dbReference>
<dbReference type="GO" id="GO:0008479">
    <property type="term" value="F:tRNA-guanosine(34) queuine transglycosylase activity"/>
    <property type="evidence" value="ECO:0007669"/>
    <property type="project" value="UniProtKB-UniRule"/>
</dbReference>
<dbReference type="GO" id="GO:0008616">
    <property type="term" value="P:queuosine biosynthetic process"/>
    <property type="evidence" value="ECO:0007669"/>
    <property type="project" value="UniProtKB-UniRule"/>
</dbReference>
<dbReference type="GO" id="GO:0002099">
    <property type="term" value="P:tRNA wobble guanine modification"/>
    <property type="evidence" value="ECO:0007669"/>
    <property type="project" value="TreeGrafter"/>
</dbReference>
<dbReference type="GO" id="GO:0101030">
    <property type="term" value="P:tRNA-guanine transglycosylation"/>
    <property type="evidence" value="ECO:0007669"/>
    <property type="project" value="InterPro"/>
</dbReference>
<dbReference type="FunFam" id="3.20.20.105:FF:000001">
    <property type="entry name" value="Queuine tRNA-ribosyltransferase"/>
    <property type="match status" value="1"/>
</dbReference>
<dbReference type="Gene3D" id="3.20.20.105">
    <property type="entry name" value="Queuine tRNA-ribosyltransferase-like"/>
    <property type="match status" value="1"/>
</dbReference>
<dbReference type="HAMAP" id="MF_00168">
    <property type="entry name" value="Q_tRNA_Tgt"/>
    <property type="match status" value="1"/>
</dbReference>
<dbReference type="InterPro" id="IPR050076">
    <property type="entry name" value="ArchSynthase1/Queuine_TRR"/>
</dbReference>
<dbReference type="InterPro" id="IPR004803">
    <property type="entry name" value="TGT"/>
</dbReference>
<dbReference type="InterPro" id="IPR036511">
    <property type="entry name" value="TGT-like_sf"/>
</dbReference>
<dbReference type="InterPro" id="IPR002616">
    <property type="entry name" value="tRNA_ribo_trans-like"/>
</dbReference>
<dbReference type="NCBIfam" id="TIGR00430">
    <property type="entry name" value="Q_tRNA_tgt"/>
    <property type="match status" value="1"/>
</dbReference>
<dbReference type="NCBIfam" id="TIGR00449">
    <property type="entry name" value="tgt_general"/>
    <property type="match status" value="1"/>
</dbReference>
<dbReference type="PANTHER" id="PTHR46499">
    <property type="entry name" value="QUEUINE TRNA-RIBOSYLTRANSFERASE"/>
    <property type="match status" value="1"/>
</dbReference>
<dbReference type="PANTHER" id="PTHR46499:SF1">
    <property type="entry name" value="QUEUINE TRNA-RIBOSYLTRANSFERASE"/>
    <property type="match status" value="1"/>
</dbReference>
<dbReference type="Pfam" id="PF01702">
    <property type="entry name" value="TGT"/>
    <property type="match status" value="1"/>
</dbReference>
<dbReference type="SUPFAM" id="SSF51713">
    <property type="entry name" value="tRNA-guanine transglycosylase"/>
    <property type="match status" value="1"/>
</dbReference>
<organism>
    <name type="scientific">Listeria monocytogenes serotype 4a (strain HCC23)</name>
    <dbReference type="NCBI Taxonomy" id="552536"/>
    <lineage>
        <taxon>Bacteria</taxon>
        <taxon>Bacillati</taxon>
        <taxon>Bacillota</taxon>
        <taxon>Bacilli</taxon>
        <taxon>Bacillales</taxon>
        <taxon>Listeriaceae</taxon>
        <taxon>Listeria</taxon>
    </lineage>
</organism>
<proteinExistence type="inferred from homology"/>
<sequence>MSAIRYELIKTDKQTGARLGKIHTPHGTFDTPMFMPVGTLATVKTMSPEELKAMGAGIILSNTYHLWLRPGEELIREAGGLHKFMNWDQPILTDSGGFQVFSLSKMRDIKEEGVHFRNHLNGDKLFLSPEKAIQIQNALGSDIMMSFDECPPYPASHEYMKKSVERTSRWAERGLKAHERPEDQGLFGIVQGGAYEDLRAQSAKDLVSLDFPGYSIGGLSVGEPKDVMNRVLEHTTPLLPANKPRYLMGVGSPDSLIDGVIRGVDMFDCVLPTRIARNGTCMTSSGRLVIKNAKFTHDFRPIDENCDCYTCKNYSRAYIRHLIRCEETFGIRLTTYHNLHFLLNLMKQVRGAIMEDRLADFREEFFEQYGFNRPDAKNF</sequence>
<name>TGT_LISMH</name>
<reference key="1">
    <citation type="journal article" date="2011" name="J. Bacteriol.">
        <title>Genome sequence of lineage III Listeria monocytogenes strain HCC23.</title>
        <authorList>
            <person name="Steele C.L."/>
            <person name="Donaldson J.R."/>
            <person name="Paul D."/>
            <person name="Banes M.M."/>
            <person name="Arick T."/>
            <person name="Bridges S.M."/>
            <person name="Lawrence M.L."/>
        </authorList>
    </citation>
    <scope>NUCLEOTIDE SEQUENCE [LARGE SCALE GENOMIC DNA]</scope>
    <source>
        <strain>HCC23</strain>
    </source>
</reference>